<keyword id="KW-1003">Cell membrane</keyword>
<keyword id="KW-0472">Membrane</keyword>
<keyword id="KW-0812">Transmembrane</keyword>
<keyword id="KW-1133">Transmembrane helix</keyword>
<keyword id="KW-0813">Transport</keyword>
<reference key="1">
    <citation type="journal article" date="1999" name="Nature">
        <title>Genomic sequence comparison of two unrelated isolates of the human gastric pathogen Helicobacter pylori.</title>
        <authorList>
            <person name="Alm R.A."/>
            <person name="Ling L.-S.L."/>
            <person name="Moir D.T."/>
            <person name="King B.L."/>
            <person name="Brown E.D."/>
            <person name="Doig P.C."/>
            <person name="Smith D.R."/>
            <person name="Noonan B."/>
            <person name="Guild B.C."/>
            <person name="deJonge B.L."/>
            <person name="Carmel G."/>
            <person name="Tummino P.J."/>
            <person name="Caruso A."/>
            <person name="Uria-Nickelsen M."/>
            <person name="Mills D.M."/>
            <person name="Ives C."/>
            <person name="Gibson R."/>
            <person name="Merberg D."/>
            <person name="Mills S.D."/>
            <person name="Jiang Q."/>
            <person name="Taylor D.E."/>
            <person name="Vovis G.F."/>
            <person name="Trust T.J."/>
        </authorList>
    </citation>
    <scope>NUCLEOTIDE SEQUENCE [LARGE SCALE GENOMIC DNA]</scope>
    <source>
        <strain>J99 / ATCC 700824</strain>
    </source>
</reference>
<sequence length="349" mass="39805">MKAQYFFWILFLIGFYWMLYLYQDFLMDALIAGLLCVGLFQVKVFLNKRFSNVISSFLCVLVLASVVIVPLYFIVYKGSNVIFEINFEKLSALIKWLKGTITENLSHFPAIHDGVSKFLENFSAASITGYLLKVSSYIGKYSLKLVTDALFILGLLFFFFYYGEKFYRYFLGVLPLEMNQSKKIFEEVAGILRIVLLTSLITVILEGVAFGTMIIWFGHDGWSLGILYGLASLVPAVGGALIWIPIAIYELYHGHVNEAIFIVLYSILLIGVLIDSVIKPILIVFIKKRIFKTTLKINEILIFFSMIAGISQFGFWGIIVGPTITAFFIALLRLYENYFIQKEQKTCEC</sequence>
<name>Y567_HELPJ</name>
<feature type="chain" id="PRO_0000148316" description="Putative transport protein jhp_0514">
    <location>
        <begin position="1"/>
        <end position="349"/>
    </location>
</feature>
<feature type="transmembrane region" description="Helical" evidence="1">
    <location>
        <begin position="6"/>
        <end position="26"/>
    </location>
</feature>
<feature type="transmembrane region" description="Helical" evidence="1">
    <location>
        <begin position="27"/>
        <end position="47"/>
    </location>
</feature>
<feature type="transmembrane region" description="Helical" evidence="1">
    <location>
        <begin position="56"/>
        <end position="76"/>
    </location>
</feature>
<feature type="transmembrane region" description="Helical" evidence="1">
    <location>
        <begin position="143"/>
        <end position="163"/>
    </location>
</feature>
<feature type="transmembrane region" description="Helical" evidence="1">
    <location>
        <begin position="195"/>
        <end position="215"/>
    </location>
</feature>
<feature type="transmembrane region" description="Helical" evidence="1">
    <location>
        <begin position="224"/>
        <end position="244"/>
    </location>
</feature>
<feature type="transmembrane region" description="Helical" evidence="1">
    <location>
        <begin position="258"/>
        <end position="278"/>
    </location>
</feature>
<feature type="transmembrane region" description="Helical" evidence="1">
    <location>
        <begin position="300"/>
        <end position="320"/>
    </location>
</feature>
<gene>
    <name type="ordered locus">jhp_0514</name>
</gene>
<organism>
    <name type="scientific">Helicobacter pylori (strain J99 / ATCC 700824)</name>
    <name type="common">Campylobacter pylori J99</name>
    <dbReference type="NCBI Taxonomy" id="85963"/>
    <lineage>
        <taxon>Bacteria</taxon>
        <taxon>Pseudomonadati</taxon>
        <taxon>Campylobacterota</taxon>
        <taxon>Epsilonproteobacteria</taxon>
        <taxon>Campylobacterales</taxon>
        <taxon>Helicobacteraceae</taxon>
        <taxon>Helicobacter</taxon>
    </lineage>
</organism>
<protein>
    <recommendedName>
        <fullName>Putative transport protein jhp_0514</fullName>
    </recommendedName>
</protein>
<evidence type="ECO:0000255" key="1"/>
<evidence type="ECO:0000305" key="2"/>
<proteinExistence type="inferred from homology"/>
<dbReference type="EMBL" id="AE001439">
    <property type="protein sequence ID" value="AAD06090.1"/>
    <property type="molecule type" value="Genomic_DNA"/>
</dbReference>
<dbReference type="PIR" id="H71923">
    <property type="entry name" value="H71923"/>
</dbReference>
<dbReference type="RefSeq" id="WP_000647394.1">
    <property type="nucleotide sequence ID" value="NZ_CP011330.1"/>
</dbReference>
<dbReference type="SMR" id="Q9ZLR4"/>
<dbReference type="KEGG" id="hpj:jhp_0514"/>
<dbReference type="PATRIC" id="fig|85963.30.peg.482"/>
<dbReference type="eggNOG" id="COG0628">
    <property type="taxonomic scope" value="Bacteria"/>
</dbReference>
<dbReference type="Proteomes" id="UP000000804">
    <property type="component" value="Chromosome"/>
</dbReference>
<dbReference type="GO" id="GO:0005886">
    <property type="term" value="C:plasma membrane"/>
    <property type="evidence" value="ECO:0007669"/>
    <property type="project" value="UniProtKB-SubCell"/>
</dbReference>
<dbReference type="InterPro" id="IPR002549">
    <property type="entry name" value="AI-2E-like"/>
</dbReference>
<dbReference type="PANTHER" id="PTHR21716">
    <property type="entry name" value="TRANSMEMBRANE PROTEIN"/>
    <property type="match status" value="1"/>
</dbReference>
<dbReference type="PANTHER" id="PTHR21716:SF4">
    <property type="entry name" value="TRANSMEMBRANE PROTEIN 245"/>
    <property type="match status" value="1"/>
</dbReference>
<dbReference type="Pfam" id="PF01594">
    <property type="entry name" value="AI-2E_transport"/>
    <property type="match status" value="1"/>
</dbReference>
<accession>Q9ZLR4</accession>
<comment type="subcellular location">
    <subcellularLocation>
        <location evidence="2">Cell membrane</location>
        <topology evidence="2">Multi-pass membrane protein</topology>
    </subcellularLocation>
</comment>
<comment type="similarity">
    <text evidence="2">Belongs to the autoinducer-2 exporter (AI-2E) (TC 2.A.86) family.</text>
</comment>